<name>URE2_MYCVP</name>
<organism>
    <name type="scientific">Mycolicibacterium vanbaalenii (strain DSM 7251 / JCM 13017 / BCRC 16820 / KCTC 9966 / NRRL B-24157 / PYR-1)</name>
    <name type="common">Mycobacterium vanbaalenii</name>
    <dbReference type="NCBI Taxonomy" id="350058"/>
    <lineage>
        <taxon>Bacteria</taxon>
        <taxon>Bacillati</taxon>
        <taxon>Actinomycetota</taxon>
        <taxon>Actinomycetes</taxon>
        <taxon>Mycobacteriales</taxon>
        <taxon>Mycobacteriaceae</taxon>
        <taxon>Mycolicibacterium</taxon>
    </lineage>
</organism>
<protein>
    <recommendedName>
        <fullName evidence="1">Urease subunit beta</fullName>
        <ecNumber evidence="1">3.5.1.5</ecNumber>
    </recommendedName>
    <alternativeName>
        <fullName evidence="1">Urea amidohydrolase subunit beta</fullName>
    </alternativeName>
</protein>
<proteinExistence type="inferred from homology"/>
<reference key="1">
    <citation type="submission" date="2006-12" db="EMBL/GenBank/DDBJ databases">
        <title>Complete sequence of Mycobacterium vanbaalenii PYR-1.</title>
        <authorList>
            <consortium name="US DOE Joint Genome Institute"/>
            <person name="Copeland A."/>
            <person name="Lucas S."/>
            <person name="Lapidus A."/>
            <person name="Barry K."/>
            <person name="Detter J.C."/>
            <person name="Glavina del Rio T."/>
            <person name="Hammon N."/>
            <person name="Israni S."/>
            <person name="Dalin E."/>
            <person name="Tice H."/>
            <person name="Pitluck S."/>
            <person name="Singan V."/>
            <person name="Schmutz J."/>
            <person name="Larimer F."/>
            <person name="Land M."/>
            <person name="Hauser L."/>
            <person name="Kyrpides N."/>
            <person name="Anderson I.J."/>
            <person name="Miller C."/>
            <person name="Richardson P."/>
        </authorList>
    </citation>
    <scope>NUCLEOTIDE SEQUENCE [LARGE SCALE GENOMIC DNA]</scope>
    <source>
        <strain>DSM 7251 / JCM 13017 / BCRC 16820 / KCTC 9966 / NRRL B-24157 / PYR-1</strain>
    </source>
</reference>
<evidence type="ECO:0000255" key="1">
    <source>
        <dbReference type="HAMAP-Rule" id="MF_01954"/>
    </source>
</evidence>
<sequence length="104" mass="10982">MIPGEFVFGDGDIEINAGAVRLELPIVNTGDRPVQVGSHVHVPQANGALEFDRAAAHGYRFDIPAGTAIRFEPGVAQHVRLIPLGGAREVHGLTLDPPGRLDAS</sequence>
<comment type="catalytic activity">
    <reaction evidence="1">
        <text>urea + 2 H2O + H(+) = hydrogencarbonate + 2 NH4(+)</text>
        <dbReference type="Rhea" id="RHEA:20557"/>
        <dbReference type="ChEBI" id="CHEBI:15377"/>
        <dbReference type="ChEBI" id="CHEBI:15378"/>
        <dbReference type="ChEBI" id="CHEBI:16199"/>
        <dbReference type="ChEBI" id="CHEBI:17544"/>
        <dbReference type="ChEBI" id="CHEBI:28938"/>
        <dbReference type="EC" id="3.5.1.5"/>
    </reaction>
</comment>
<comment type="pathway">
    <text evidence="1">Nitrogen metabolism; urea degradation; CO(2) and NH(3) from urea (urease route): step 1/1.</text>
</comment>
<comment type="subunit">
    <text evidence="1">Heterotrimer of UreA (gamma), UreB (beta) and UreC (alpha) subunits. Three heterotrimers associate to form the active enzyme.</text>
</comment>
<comment type="subcellular location">
    <subcellularLocation>
        <location evidence="1">Cytoplasm</location>
    </subcellularLocation>
</comment>
<comment type="similarity">
    <text evidence="1">Belongs to the urease beta subunit family.</text>
</comment>
<keyword id="KW-0963">Cytoplasm</keyword>
<keyword id="KW-0378">Hydrolase</keyword>
<dbReference type="EC" id="3.5.1.5" evidence="1"/>
<dbReference type="EMBL" id="CP000511">
    <property type="protein sequence ID" value="ABM13885.1"/>
    <property type="molecule type" value="Genomic_DNA"/>
</dbReference>
<dbReference type="RefSeq" id="WP_011780290.1">
    <property type="nucleotide sequence ID" value="NZ_JACKSD010000030.1"/>
</dbReference>
<dbReference type="SMR" id="A1T9N5"/>
<dbReference type="STRING" id="350058.Mvan_3083"/>
<dbReference type="KEGG" id="mva:Mvan_3083"/>
<dbReference type="eggNOG" id="COG0832">
    <property type="taxonomic scope" value="Bacteria"/>
</dbReference>
<dbReference type="HOGENOM" id="CLU_129707_1_1_11"/>
<dbReference type="UniPathway" id="UPA00258">
    <property type="reaction ID" value="UER00370"/>
</dbReference>
<dbReference type="Proteomes" id="UP000009159">
    <property type="component" value="Chromosome"/>
</dbReference>
<dbReference type="GO" id="GO:0035550">
    <property type="term" value="C:urease complex"/>
    <property type="evidence" value="ECO:0007669"/>
    <property type="project" value="InterPro"/>
</dbReference>
<dbReference type="GO" id="GO:0009039">
    <property type="term" value="F:urease activity"/>
    <property type="evidence" value="ECO:0007669"/>
    <property type="project" value="UniProtKB-UniRule"/>
</dbReference>
<dbReference type="GO" id="GO:0043419">
    <property type="term" value="P:urea catabolic process"/>
    <property type="evidence" value="ECO:0007669"/>
    <property type="project" value="UniProtKB-UniRule"/>
</dbReference>
<dbReference type="CDD" id="cd00407">
    <property type="entry name" value="Urease_beta"/>
    <property type="match status" value="1"/>
</dbReference>
<dbReference type="Gene3D" id="2.10.150.10">
    <property type="entry name" value="Urease, beta subunit"/>
    <property type="match status" value="1"/>
</dbReference>
<dbReference type="HAMAP" id="MF_01954">
    <property type="entry name" value="Urease_beta"/>
    <property type="match status" value="1"/>
</dbReference>
<dbReference type="InterPro" id="IPR002019">
    <property type="entry name" value="Urease_beta-like"/>
</dbReference>
<dbReference type="InterPro" id="IPR036461">
    <property type="entry name" value="Urease_betasu_sf"/>
</dbReference>
<dbReference type="InterPro" id="IPR050069">
    <property type="entry name" value="Urease_subunit"/>
</dbReference>
<dbReference type="NCBIfam" id="NF009682">
    <property type="entry name" value="PRK13203.1"/>
    <property type="match status" value="1"/>
</dbReference>
<dbReference type="NCBIfam" id="TIGR00192">
    <property type="entry name" value="urease_beta"/>
    <property type="match status" value="1"/>
</dbReference>
<dbReference type="PANTHER" id="PTHR33569">
    <property type="entry name" value="UREASE"/>
    <property type="match status" value="1"/>
</dbReference>
<dbReference type="PANTHER" id="PTHR33569:SF1">
    <property type="entry name" value="UREASE"/>
    <property type="match status" value="1"/>
</dbReference>
<dbReference type="Pfam" id="PF00699">
    <property type="entry name" value="Urease_beta"/>
    <property type="match status" value="1"/>
</dbReference>
<dbReference type="SUPFAM" id="SSF51278">
    <property type="entry name" value="Urease, beta-subunit"/>
    <property type="match status" value="1"/>
</dbReference>
<feature type="chain" id="PRO_1000070750" description="Urease subunit beta">
    <location>
        <begin position="1"/>
        <end position="104"/>
    </location>
</feature>
<gene>
    <name evidence="1" type="primary">ureB</name>
    <name type="ordered locus">Mvan_3083</name>
</gene>
<accession>A1T9N5</accession>